<reference key="1">
    <citation type="journal article" date="2003" name="Genome Res.">
        <title>Comparative genome analysis of Vibrio vulnificus, a marine pathogen.</title>
        <authorList>
            <person name="Chen C.-Y."/>
            <person name="Wu K.-M."/>
            <person name="Chang Y.-C."/>
            <person name="Chang C.-H."/>
            <person name="Tsai H.-C."/>
            <person name="Liao T.-L."/>
            <person name="Liu Y.-M."/>
            <person name="Chen H.-J."/>
            <person name="Shen A.B.-T."/>
            <person name="Li J.-C."/>
            <person name="Su T.-L."/>
            <person name="Shao C.-P."/>
            <person name="Lee C.-T."/>
            <person name="Hor L.-I."/>
            <person name="Tsai S.-F."/>
        </authorList>
    </citation>
    <scope>NUCLEOTIDE SEQUENCE [LARGE SCALE GENOMIC DNA]</scope>
    <source>
        <strain>YJ016</strain>
    </source>
</reference>
<comment type="function">
    <text evidence="1">Catalyzes the transfer of a two-carbon ketol group from a ketose donor to an aldose acceptor, via a covalent intermediate with the cofactor thiamine pyrophosphate.</text>
</comment>
<comment type="catalytic activity">
    <reaction>
        <text>D-sedoheptulose 7-phosphate + D-glyceraldehyde 3-phosphate = aldehydo-D-ribose 5-phosphate + D-xylulose 5-phosphate</text>
        <dbReference type="Rhea" id="RHEA:10508"/>
        <dbReference type="ChEBI" id="CHEBI:57483"/>
        <dbReference type="ChEBI" id="CHEBI:57737"/>
        <dbReference type="ChEBI" id="CHEBI:58273"/>
        <dbReference type="ChEBI" id="CHEBI:59776"/>
        <dbReference type="EC" id="2.2.1.1"/>
    </reaction>
</comment>
<comment type="cofactor">
    <cofactor evidence="1">
        <name>Mg(2+)</name>
        <dbReference type="ChEBI" id="CHEBI:18420"/>
    </cofactor>
    <cofactor evidence="1">
        <name>Ca(2+)</name>
        <dbReference type="ChEBI" id="CHEBI:29108"/>
    </cofactor>
    <cofactor evidence="1">
        <name>Mn(2+)</name>
        <dbReference type="ChEBI" id="CHEBI:29035"/>
    </cofactor>
    <cofactor evidence="1">
        <name>Co(2+)</name>
        <dbReference type="ChEBI" id="CHEBI:48828"/>
    </cofactor>
    <text evidence="1">Binds 1 Mg(2+) ion per subunit. Can also utilize other divalent metal cations, such as Ca(2+), Mn(2+) and Co(2+).</text>
</comment>
<comment type="cofactor">
    <cofactor evidence="1">
        <name>thiamine diphosphate</name>
        <dbReference type="ChEBI" id="CHEBI:58937"/>
    </cofactor>
    <text evidence="1">Binds 1 thiamine pyrophosphate per subunit.</text>
</comment>
<comment type="subunit">
    <text evidence="1">Homodimer.</text>
</comment>
<comment type="similarity">
    <text evidence="2">Belongs to the transketolase family.</text>
</comment>
<comment type="sequence caution" evidence="2">
    <conflict type="erroneous initiation">
        <sequence resource="EMBL-CDS" id="BAC95626"/>
    </conflict>
</comment>
<protein>
    <recommendedName>
        <fullName>Transketolase 1</fullName>
        <shortName>TK 1</shortName>
        <ecNumber>2.2.1.1</ecNumber>
    </recommendedName>
</protein>
<gene>
    <name type="primary">tkt1</name>
    <name type="ordered locus">VV2862</name>
</gene>
<accession>Q7MHK7</accession>
<name>TKT1_VIBVY</name>
<evidence type="ECO:0000250" key="1"/>
<evidence type="ECO:0000305" key="2"/>
<dbReference type="EC" id="2.2.1.1"/>
<dbReference type="EMBL" id="BA000037">
    <property type="protein sequence ID" value="BAC95626.1"/>
    <property type="status" value="ALT_INIT"/>
    <property type="molecule type" value="Genomic_DNA"/>
</dbReference>
<dbReference type="RefSeq" id="WP_043877323.1">
    <property type="nucleotide sequence ID" value="NC_005139.1"/>
</dbReference>
<dbReference type="SMR" id="Q7MHK7"/>
<dbReference type="STRING" id="672.VV93_v1c25680"/>
<dbReference type="KEGG" id="vvy:VV2862"/>
<dbReference type="PATRIC" id="fig|196600.6.peg.2849"/>
<dbReference type="eggNOG" id="COG0021">
    <property type="taxonomic scope" value="Bacteria"/>
</dbReference>
<dbReference type="HOGENOM" id="CLU_009227_0_1_6"/>
<dbReference type="Proteomes" id="UP000002675">
    <property type="component" value="Chromosome I"/>
</dbReference>
<dbReference type="GO" id="GO:0005829">
    <property type="term" value="C:cytosol"/>
    <property type="evidence" value="ECO:0007669"/>
    <property type="project" value="TreeGrafter"/>
</dbReference>
<dbReference type="GO" id="GO:0046872">
    <property type="term" value="F:metal ion binding"/>
    <property type="evidence" value="ECO:0007669"/>
    <property type="project" value="UniProtKB-KW"/>
</dbReference>
<dbReference type="GO" id="GO:0004802">
    <property type="term" value="F:transketolase activity"/>
    <property type="evidence" value="ECO:0007669"/>
    <property type="project" value="UniProtKB-EC"/>
</dbReference>
<dbReference type="GO" id="GO:0006098">
    <property type="term" value="P:pentose-phosphate shunt"/>
    <property type="evidence" value="ECO:0007669"/>
    <property type="project" value="TreeGrafter"/>
</dbReference>
<dbReference type="CDD" id="cd07033">
    <property type="entry name" value="TPP_PYR_DXS_TK_like"/>
    <property type="match status" value="1"/>
</dbReference>
<dbReference type="CDD" id="cd02012">
    <property type="entry name" value="TPP_TK"/>
    <property type="match status" value="1"/>
</dbReference>
<dbReference type="FunFam" id="3.40.50.920:FF:000003">
    <property type="entry name" value="Transketolase"/>
    <property type="match status" value="1"/>
</dbReference>
<dbReference type="FunFam" id="3.40.50.970:FF:000003">
    <property type="entry name" value="Transketolase"/>
    <property type="match status" value="1"/>
</dbReference>
<dbReference type="FunFam" id="3.40.50.970:FF:000004">
    <property type="entry name" value="Transketolase"/>
    <property type="match status" value="1"/>
</dbReference>
<dbReference type="Gene3D" id="3.40.50.920">
    <property type="match status" value="1"/>
</dbReference>
<dbReference type="Gene3D" id="3.40.50.970">
    <property type="match status" value="2"/>
</dbReference>
<dbReference type="InterPro" id="IPR029061">
    <property type="entry name" value="THDP-binding"/>
</dbReference>
<dbReference type="InterPro" id="IPR009014">
    <property type="entry name" value="Transketo_C/PFOR_II"/>
</dbReference>
<dbReference type="InterPro" id="IPR055152">
    <property type="entry name" value="Transketolase-like_C_2"/>
</dbReference>
<dbReference type="InterPro" id="IPR005475">
    <property type="entry name" value="Transketolase-like_Pyr-bd"/>
</dbReference>
<dbReference type="InterPro" id="IPR005478">
    <property type="entry name" value="Transketolase_bac-like"/>
</dbReference>
<dbReference type="InterPro" id="IPR020826">
    <property type="entry name" value="Transketolase_BS"/>
</dbReference>
<dbReference type="InterPro" id="IPR049557">
    <property type="entry name" value="Transketolase_CS"/>
</dbReference>
<dbReference type="InterPro" id="IPR033247">
    <property type="entry name" value="Transketolase_fam"/>
</dbReference>
<dbReference type="InterPro" id="IPR005474">
    <property type="entry name" value="Transketolase_N"/>
</dbReference>
<dbReference type="NCBIfam" id="TIGR00232">
    <property type="entry name" value="tktlase_bact"/>
    <property type="match status" value="1"/>
</dbReference>
<dbReference type="PANTHER" id="PTHR43522">
    <property type="entry name" value="TRANSKETOLASE"/>
    <property type="match status" value="1"/>
</dbReference>
<dbReference type="PANTHER" id="PTHR43522:SF2">
    <property type="entry name" value="TRANSKETOLASE 1-RELATED"/>
    <property type="match status" value="1"/>
</dbReference>
<dbReference type="Pfam" id="PF02779">
    <property type="entry name" value="Transket_pyr"/>
    <property type="match status" value="1"/>
</dbReference>
<dbReference type="Pfam" id="PF22613">
    <property type="entry name" value="Transketolase_C_1"/>
    <property type="match status" value="1"/>
</dbReference>
<dbReference type="Pfam" id="PF00456">
    <property type="entry name" value="Transketolase_N"/>
    <property type="match status" value="1"/>
</dbReference>
<dbReference type="SMART" id="SM00861">
    <property type="entry name" value="Transket_pyr"/>
    <property type="match status" value="1"/>
</dbReference>
<dbReference type="SUPFAM" id="SSF52518">
    <property type="entry name" value="Thiamin diphosphate-binding fold (THDP-binding)"/>
    <property type="match status" value="2"/>
</dbReference>
<dbReference type="SUPFAM" id="SSF52922">
    <property type="entry name" value="TK C-terminal domain-like"/>
    <property type="match status" value="1"/>
</dbReference>
<dbReference type="PROSITE" id="PS00801">
    <property type="entry name" value="TRANSKETOLASE_1"/>
    <property type="match status" value="1"/>
</dbReference>
<dbReference type="PROSITE" id="PS00802">
    <property type="entry name" value="TRANSKETOLASE_2"/>
    <property type="match status" value="1"/>
</dbReference>
<sequence>MPSRKHLANAIRALSMDGVQKANSGHPGAPMGMADIAEVLWRGHLNHNPSNPEWADRDRFVLSNGHGSMLIYSLLHLSGYELSIDDLKNFRQLHSKTPGHPEYGYAPGIETTTGPLGQGITNAVGMAMAEKALAAQFNKEGHDIVDHFTYVFMGDGCLMEGISHEACSLAGTLGLGKLIAFWDDNGISIDGHVEGWFSDDTPKRFEAYGWHVIPAVDGHNAEAINAAIEAAKADPRPTLICTKTIIGFGSPNKSGSHDCHGAPLGAEEIAAAREFLGWEHPAFEIPADVYAEWDAKAAGAAKEAAWNAKFDAYAAAYPAEAAEFKRRVNGELPAQWEEKANQIIADLQANPANIASRKASQNALEAFGKMLPEFMGGSADLAPSNLTMWSGSKSLEASDFSGNYIHYGVREFGMTAIMNGIALHGGFVPYGATFLMFMEYARNAMRMAALMKVQNIQVYTHDSIGLGEDGPTHQPVEQIASLRLTPNMSTWRPCDQVESAVAWKLAIERKDGPSALIFSRQNLAQQPRSAEQVADIAKGGYILKDSDGKPELILIATGSEVELAVKAAEQLTAEGKKVRVVSMPATDAFDKQDAAYRESVLPSDVTARIAIEAGIADFWYKYVGFDGRIIGMTTFGESAPADQLFEMFGFTVENVVNTAKELLA</sequence>
<organism>
    <name type="scientific">Vibrio vulnificus (strain YJ016)</name>
    <dbReference type="NCBI Taxonomy" id="196600"/>
    <lineage>
        <taxon>Bacteria</taxon>
        <taxon>Pseudomonadati</taxon>
        <taxon>Pseudomonadota</taxon>
        <taxon>Gammaproteobacteria</taxon>
        <taxon>Vibrionales</taxon>
        <taxon>Vibrionaceae</taxon>
        <taxon>Vibrio</taxon>
    </lineage>
</organism>
<proteinExistence type="inferred from homology"/>
<feature type="chain" id="PRO_0000191888" description="Transketolase 1">
    <location>
        <begin position="1"/>
        <end position="664"/>
    </location>
</feature>
<feature type="active site" description="Proton donor" evidence="1">
    <location>
        <position position="411"/>
    </location>
</feature>
<feature type="binding site" evidence="1">
    <location>
        <position position="26"/>
    </location>
    <ligand>
        <name>substrate</name>
    </ligand>
</feature>
<feature type="binding site" evidence="1">
    <location>
        <position position="66"/>
    </location>
    <ligand>
        <name>thiamine diphosphate</name>
        <dbReference type="ChEBI" id="CHEBI:58937"/>
    </ligand>
</feature>
<feature type="binding site" evidence="1">
    <location>
        <begin position="114"/>
        <end position="116"/>
    </location>
    <ligand>
        <name>thiamine diphosphate</name>
        <dbReference type="ChEBI" id="CHEBI:58937"/>
    </ligand>
</feature>
<feature type="binding site" evidence="1">
    <location>
        <position position="155"/>
    </location>
    <ligand>
        <name>Mg(2+)</name>
        <dbReference type="ChEBI" id="CHEBI:18420"/>
    </ligand>
</feature>
<feature type="binding site" evidence="1">
    <location>
        <position position="156"/>
    </location>
    <ligand>
        <name>thiamine diphosphate</name>
        <dbReference type="ChEBI" id="CHEBI:58937"/>
    </ligand>
</feature>
<feature type="binding site" evidence="1">
    <location>
        <position position="185"/>
    </location>
    <ligand>
        <name>Mg(2+)</name>
        <dbReference type="ChEBI" id="CHEBI:18420"/>
    </ligand>
</feature>
<feature type="binding site" evidence="1">
    <location>
        <position position="185"/>
    </location>
    <ligand>
        <name>thiamine diphosphate</name>
        <dbReference type="ChEBI" id="CHEBI:58937"/>
    </ligand>
</feature>
<feature type="binding site" evidence="1">
    <location>
        <position position="187"/>
    </location>
    <ligand>
        <name>Mg(2+)</name>
        <dbReference type="ChEBI" id="CHEBI:18420"/>
    </ligand>
</feature>
<feature type="binding site" evidence="1">
    <location>
        <position position="260"/>
    </location>
    <ligand>
        <name>substrate</name>
    </ligand>
</feature>
<feature type="binding site" evidence="1">
    <location>
        <position position="260"/>
    </location>
    <ligand>
        <name>thiamine diphosphate</name>
        <dbReference type="ChEBI" id="CHEBI:58937"/>
    </ligand>
</feature>
<feature type="binding site" evidence="1">
    <location>
        <position position="357"/>
    </location>
    <ligand>
        <name>substrate</name>
    </ligand>
</feature>
<feature type="binding site" evidence="1">
    <location>
        <position position="384"/>
    </location>
    <ligand>
        <name>substrate</name>
    </ligand>
</feature>
<feature type="binding site" evidence="1">
    <location>
        <position position="437"/>
    </location>
    <ligand>
        <name>thiamine diphosphate</name>
        <dbReference type="ChEBI" id="CHEBI:58937"/>
    </ligand>
</feature>
<feature type="binding site" evidence="1">
    <location>
        <position position="461"/>
    </location>
    <ligand>
        <name>substrate</name>
    </ligand>
</feature>
<feature type="binding site" evidence="1">
    <location>
        <position position="469"/>
    </location>
    <ligand>
        <name>substrate</name>
    </ligand>
</feature>
<feature type="binding site" evidence="1">
    <location>
        <position position="520"/>
    </location>
    <ligand>
        <name>substrate</name>
    </ligand>
</feature>
<feature type="site" description="Important for catalytic activity" evidence="1">
    <location>
        <position position="26"/>
    </location>
</feature>
<feature type="site" description="Important for catalytic activity" evidence="1">
    <location>
        <position position="260"/>
    </location>
</feature>
<keyword id="KW-0106">Calcium</keyword>
<keyword id="KW-0460">Magnesium</keyword>
<keyword id="KW-0479">Metal-binding</keyword>
<keyword id="KW-0786">Thiamine pyrophosphate</keyword>
<keyword id="KW-0808">Transferase</keyword>